<comment type="function">
    <text>Identified in a screen for mutants with decreased levels of rDNA transcription.</text>
</comment>
<comment type="subcellular location">
    <subcellularLocation>
        <location evidence="2">Membrane</location>
        <topology evidence="2">Multi-pass membrane protein</topology>
    </subcellularLocation>
</comment>
<comment type="miscellaneous">
    <text evidence="2">Almost completely overlaps INP52.</text>
</comment>
<comment type="caution">
    <text evidence="3">Product of a dubious gene prediction unlikely to encode a functional protein. Because of that it is not part of the S.cerevisiae S288c complete/reference proteome set.</text>
</comment>
<sequence length="142" mass="16168">MSMKSHLELFKQKKSTAYILLTVLFGIGWATLDLPVMVAMNIRPSISMRPIKPYISWLDSLLKPLPFNSAFGTNSTAHVDLREFLLFIGLNTSPCVSETIAIFLVCCFDRSIFIATEYLFLILLPLRGLCHQFCEQKYVETI</sequence>
<accession>P50943</accession>
<proteinExistence type="uncertain"/>
<protein>
    <recommendedName>
        <fullName>Putative regulator of rDNA transcription protein 16</fullName>
    </recommendedName>
</protein>
<name>RRT16_YEAST</name>
<feature type="chain" id="PRO_0000203437" description="Putative regulator of rDNA transcription protein 16">
    <location>
        <begin position="1"/>
        <end position="142"/>
    </location>
</feature>
<feature type="transmembrane region" description="Helical" evidence="1">
    <location>
        <begin position="19"/>
        <end position="39"/>
    </location>
</feature>
<feature type="transmembrane region" description="Helical" evidence="1">
    <location>
        <begin position="84"/>
        <end position="104"/>
    </location>
</feature>
<feature type="transmembrane region" description="Helical" evidence="1">
    <location>
        <begin position="111"/>
        <end position="131"/>
    </location>
</feature>
<keyword id="KW-0472">Membrane</keyword>
<keyword id="KW-0804">Transcription</keyword>
<keyword id="KW-0805">Transcription regulation</keyword>
<keyword id="KW-0812">Transmembrane</keyword>
<keyword id="KW-1133">Transmembrane helix</keyword>
<evidence type="ECO:0000255" key="1"/>
<evidence type="ECO:0000305" key="2"/>
<evidence type="ECO:0000305" key="3">
    <source>
    </source>
</evidence>
<gene>
    <name type="primary">RRT16</name>
    <name type="ordered locus">YNL105W</name>
    <name type="ORF">N2169</name>
</gene>
<reference key="1">
    <citation type="journal article" date="1996" name="Yeast">
        <title>The sequence of a 21.3 kb DNA fragment from the left arm of yeast chromosome XIV reveals LEU4, MET4, POL1, RAS2, and six new open reading frames.</title>
        <authorList>
            <person name="Saiz J.E."/>
            <person name="Buitrago M.J."/>
            <person name="Soler A."/>
            <person name="del Rey F."/>
            <person name="Revuelta J.L."/>
        </authorList>
    </citation>
    <scope>NUCLEOTIDE SEQUENCE [GENOMIC DNA]</scope>
    <source>
        <strain>ATCC 96604 / S288c / FY1679</strain>
    </source>
</reference>
<reference key="2">
    <citation type="journal article" date="1997" name="Nature">
        <title>The nucleotide sequence of Saccharomyces cerevisiae chromosome XIV and its evolutionary implications.</title>
        <authorList>
            <person name="Philippsen P."/>
            <person name="Kleine K."/>
            <person name="Poehlmann R."/>
            <person name="Duesterhoeft A."/>
            <person name="Hamberg K."/>
            <person name="Hegemann J.H."/>
            <person name="Obermaier B."/>
            <person name="Urrestarazu L.A."/>
            <person name="Aert R."/>
            <person name="Albermann K."/>
            <person name="Altmann R."/>
            <person name="Andre B."/>
            <person name="Baladron V."/>
            <person name="Ballesta J.P.G."/>
            <person name="Becam A.-M."/>
            <person name="Beinhauer J.D."/>
            <person name="Boskovic J."/>
            <person name="Buitrago M.J."/>
            <person name="Bussereau F."/>
            <person name="Coster F."/>
            <person name="Crouzet M."/>
            <person name="D'Angelo M."/>
            <person name="Dal Pero F."/>
            <person name="De Antoni A."/>
            <person name="del Rey F."/>
            <person name="Doignon F."/>
            <person name="Domdey H."/>
            <person name="Dubois E."/>
            <person name="Fiedler T.A."/>
            <person name="Fleig U."/>
            <person name="Floeth M."/>
            <person name="Fritz C."/>
            <person name="Gaillardin C."/>
            <person name="Garcia-Cantalejo J.M."/>
            <person name="Glansdorff N."/>
            <person name="Goffeau A."/>
            <person name="Gueldener U."/>
            <person name="Herbert C.J."/>
            <person name="Heumann K."/>
            <person name="Heuss-Neitzel D."/>
            <person name="Hilbert H."/>
            <person name="Hinni K."/>
            <person name="Iraqui Houssaini I."/>
            <person name="Jacquet M."/>
            <person name="Jimenez A."/>
            <person name="Jonniaux J.-L."/>
            <person name="Karpfinger-Hartl L."/>
            <person name="Lanfranchi G."/>
            <person name="Lepingle A."/>
            <person name="Levesque H."/>
            <person name="Lyck R."/>
            <person name="Maftahi M."/>
            <person name="Mallet L."/>
            <person name="Maurer C.T.C."/>
            <person name="Messenguy F."/>
            <person name="Mewes H.-W."/>
            <person name="Moestl D."/>
            <person name="Nasr F."/>
            <person name="Nicaud J.-M."/>
            <person name="Niedenthal R.K."/>
            <person name="Pandolfo D."/>
            <person name="Pierard A."/>
            <person name="Piravandi E."/>
            <person name="Planta R.J."/>
            <person name="Pohl T.M."/>
            <person name="Purnelle B."/>
            <person name="Rebischung C."/>
            <person name="Remacha M.A."/>
            <person name="Revuelta J.L."/>
            <person name="Rinke M."/>
            <person name="Saiz J.E."/>
            <person name="Sartorello F."/>
            <person name="Scherens B."/>
            <person name="Sen-Gupta M."/>
            <person name="Soler-Mira A."/>
            <person name="Urbanus J.H.M."/>
            <person name="Valle G."/>
            <person name="Van Dyck L."/>
            <person name="Verhasselt P."/>
            <person name="Vierendeels F."/>
            <person name="Vissers S."/>
            <person name="Voet M."/>
            <person name="Volckaert G."/>
            <person name="Wach A."/>
            <person name="Wambutt R."/>
            <person name="Wedler H."/>
            <person name="Zollner A."/>
            <person name="Hani J."/>
        </authorList>
    </citation>
    <scope>NUCLEOTIDE SEQUENCE [LARGE SCALE GENOMIC DNA]</scope>
    <source>
        <strain>ATCC 204508 / S288c</strain>
    </source>
</reference>
<reference key="3">
    <citation type="journal article" date="2014" name="G3 (Bethesda)">
        <title>The reference genome sequence of Saccharomyces cerevisiae: Then and now.</title>
        <authorList>
            <person name="Engel S.R."/>
            <person name="Dietrich F.S."/>
            <person name="Fisk D.G."/>
            <person name="Binkley G."/>
            <person name="Balakrishnan R."/>
            <person name="Costanzo M.C."/>
            <person name="Dwight S.S."/>
            <person name="Hitz B.C."/>
            <person name="Karra K."/>
            <person name="Nash R.S."/>
            <person name="Weng S."/>
            <person name="Wong E.D."/>
            <person name="Lloyd P."/>
            <person name="Skrzypek M.S."/>
            <person name="Miyasato S.R."/>
            <person name="Simison M."/>
            <person name="Cherry J.M."/>
        </authorList>
    </citation>
    <scope>GENOME REANNOTATION</scope>
    <source>
        <strain>ATCC 204508 / S288c</strain>
    </source>
</reference>
<reference key="4">
    <citation type="journal article" date="2007" name="Genome Res.">
        <title>Approaching a complete repository of sequence-verified protein-encoding clones for Saccharomyces cerevisiae.</title>
        <authorList>
            <person name="Hu Y."/>
            <person name="Rolfs A."/>
            <person name="Bhullar B."/>
            <person name="Murthy T.V.S."/>
            <person name="Zhu C."/>
            <person name="Berger M.F."/>
            <person name="Camargo A.A."/>
            <person name="Kelley F."/>
            <person name="McCarron S."/>
            <person name="Jepson D."/>
            <person name="Richardson A."/>
            <person name="Raphael J."/>
            <person name="Moreira D."/>
            <person name="Taycher E."/>
            <person name="Zuo D."/>
            <person name="Mohr S."/>
            <person name="Kane M.F."/>
            <person name="Williamson J."/>
            <person name="Simpson A.J.G."/>
            <person name="Bulyk M.L."/>
            <person name="Harlow E."/>
            <person name="Marsischky G."/>
            <person name="Kolodner R.D."/>
            <person name="LaBaer J."/>
        </authorList>
    </citation>
    <scope>NUCLEOTIDE SEQUENCE [GENOMIC DNA]</scope>
    <source>
        <strain>ATCC 204508 / S288c</strain>
    </source>
</reference>
<reference key="5">
    <citation type="journal article" date="2009" name="Genetics">
        <title>Genetic identification of factors that modulate ribosomal DNA transcription in Saccharomyces cerevisiae.</title>
        <authorList>
            <person name="Hontz R.D."/>
            <person name="Niederer R.O."/>
            <person name="Johnson J.M."/>
            <person name="Smith J.S."/>
        </authorList>
    </citation>
    <scope>GENE NAME</scope>
</reference>
<dbReference type="EMBL" id="Z50161">
    <property type="protein sequence ID" value="CAA90521.1"/>
    <property type="molecule type" value="Genomic_DNA"/>
</dbReference>
<dbReference type="EMBL" id="Z71382">
    <property type="protein sequence ID" value="CAA95983.1"/>
    <property type="molecule type" value="Genomic_DNA"/>
</dbReference>
<dbReference type="EMBL" id="AY693304">
    <property type="protein sequence ID" value="AAT93323.1"/>
    <property type="molecule type" value="Genomic_DNA"/>
</dbReference>
<dbReference type="PIR" id="S58247">
    <property type="entry name" value="S58247"/>
</dbReference>
<dbReference type="DIP" id="DIP-3937N"/>
<dbReference type="IntAct" id="P50943">
    <property type="interactions" value="2"/>
</dbReference>
<dbReference type="STRING" id="4932.YNL105W"/>
<dbReference type="PaxDb" id="4932-YNL105W"/>
<dbReference type="EnsemblFungi" id="YNL105W_mRNA">
    <property type="protein sequence ID" value="YNL105W"/>
    <property type="gene ID" value="YNL105W"/>
</dbReference>
<dbReference type="AGR" id="SGD:S000005049"/>
<dbReference type="SGD" id="S000005049">
    <property type="gene designation" value="RRT16"/>
</dbReference>
<dbReference type="HOGENOM" id="CLU_1817308_0_0_1"/>
<dbReference type="GO" id="GO:0016020">
    <property type="term" value="C:membrane"/>
    <property type="evidence" value="ECO:0007669"/>
    <property type="project" value="UniProtKB-SubCell"/>
</dbReference>
<organism>
    <name type="scientific">Saccharomyces cerevisiae (strain ATCC 204508 / S288c)</name>
    <name type="common">Baker's yeast</name>
    <dbReference type="NCBI Taxonomy" id="559292"/>
    <lineage>
        <taxon>Eukaryota</taxon>
        <taxon>Fungi</taxon>
        <taxon>Dikarya</taxon>
        <taxon>Ascomycota</taxon>
        <taxon>Saccharomycotina</taxon>
        <taxon>Saccharomycetes</taxon>
        <taxon>Saccharomycetales</taxon>
        <taxon>Saccharomycetaceae</taxon>
        <taxon>Saccharomyces</taxon>
    </lineage>
</organism>